<accession>Q31VJ3</accession>
<name>GLGC_SHIBS</name>
<proteinExistence type="inferred from homology"/>
<keyword id="KW-0021">Allosteric enzyme</keyword>
<keyword id="KW-0067">ATP-binding</keyword>
<keyword id="KW-0119">Carbohydrate metabolism</keyword>
<keyword id="KW-0320">Glycogen biosynthesis</keyword>
<keyword id="KW-0321">Glycogen metabolism</keyword>
<keyword id="KW-0547">Nucleotide-binding</keyword>
<keyword id="KW-0548">Nucleotidyltransferase</keyword>
<keyword id="KW-0808">Transferase</keyword>
<sequence>MVSLEKNDHLMLARQLPLKSVALILAGGRGTRLKDLTNKRAKPAVHFGGKFRIIDFALSNCINSGIRRMGVITQYQSHTLVQHIQRGWSFFNEEMNEFVDLLPAQQRMKGENWYRGTADAVTQNLDIIRRYKAEYVVILAGDHIYKQDYSRMLIDHVEKGARCTVACMPVPIEEASAFGVMAVDENDKIIEFVEKPANPPSMPNDPSKSLASMGIYVFDADYLYELLEEDDRDENSSHDFGKDLIPKITEAGLAYAHPFPLSCVQSDPDAEPYWRDVGTLKAYWKANLDLASVVPELDMYDRNWPIRTYNESLPPAKFVQDRSGSHGMTLNSLVSGGCVISGSVVVQSVLFSRVRVNSFCNIDSAVLLPEVWVGRSCRLRRCVIDRACVIPEGMVIGENAEEDARRFYRSEEGIVLVTREMLRKLGHKQER</sequence>
<reference key="1">
    <citation type="journal article" date="2005" name="Nucleic Acids Res.">
        <title>Genome dynamics and diversity of Shigella species, the etiologic agents of bacillary dysentery.</title>
        <authorList>
            <person name="Yang F."/>
            <person name="Yang J."/>
            <person name="Zhang X."/>
            <person name="Chen L."/>
            <person name="Jiang Y."/>
            <person name="Yan Y."/>
            <person name="Tang X."/>
            <person name="Wang J."/>
            <person name="Xiong Z."/>
            <person name="Dong J."/>
            <person name="Xue Y."/>
            <person name="Zhu Y."/>
            <person name="Xu X."/>
            <person name="Sun L."/>
            <person name="Chen S."/>
            <person name="Nie H."/>
            <person name="Peng J."/>
            <person name="Xu J."/>
            <person name="Wang Y."/>
            <person name="Yuan Z."/>
            <person name="Wen Y."/>
            <person name="Yao Z."/>
            <person name="Shen Y."/>
            <person name="Qiang B."/>
            <person name="Hou Y."/>
            <person name="Yu J."/>
            <person name="Jin Q."/>
        </authorList>
    </citation>
    <scope>NUCLEOTIDE SEQUENCE [LARGE SCALE GENOMIC DNA]</scope>
    <source>
        <strain>Sb227</strain>
    </source>
</reference>
<evidence type="ECO:0000255" key="1">
    <source>
        <dbReference type="HAMAP-Rule" id="MF_00624"/>
    </source>
</evidence>
<comment type="function">
    <text evidence="1">Involved in the biosynthesis of ADP-glucose, a building block required for the elongation reactions to produce glycogen. Catalyzes the reaction between ATP and alpha-D-glucose 1-phosphate (G1P) to produce pyrophosphate and ADP-Glc.</text>
</comment>
<comment type="catalytic activity">
    <reaction evidence="1">
        <text>alpha-D-glucose 1-phosphate + ATP + H(+) = ADP-alpha-D-glucose + diphosphate</text>
        <dbReference type="Rhea" id="RHEA:12120"/>
        <dbReference type="ChEBI" id="CHEBI:15378"/>
        <dbReference type="ChEBI" id="CHEBI:30616"/>
        <dbReference type="ChEBI" id="CHEBI:33019"/>
        <dbReference type="ChEBI" id="CHEBI:57498"/>
        <dbReference type="ChEBI" id="CHEBI:58601"/>
        <dbReference type="EC" id="2.7.7.27"/>
    </reaction>
</comment>
<comment type="activity regulation">
    <text evidence="1">Allosterically activated by fructose-1,6-bisphosphate (F16BP) and inhibited by AMP.</text>
</comment>
<comment type="pathway">
    <text evidence="1">Glycan biosynthesis; glycogen biosynthesis.</text>
</comment>
<comment type="subunit">
    <text evidence="1">Homotetramer.</text>
</comment>
<comment type="similarity">
    <text evidence="1">Belongs to the bacterial/plant glucose-1-phosphate adenylyltransferase family.</text>
</comment>
<dbReference type="EC" id="2.7.7.27" evidence="1"/>
<dbReference type="EMBL" id="CP000036">
    <property type="protein sequence ID" value="ABB67915.1"/>
    <property type="molecule type" value="Genomic_DNA"/>
</dbReference>
<dbReference type="RefSeq" id="WP_000253979.1">
    <property type="nucleotide sequence ID" value="NC_007613.1"/>
</dbReference>
<dbReference type="SMR" id="Q31VJ3"/>
<dbReference type="KEGG" id="sbo:SBO_3428"/>
<dbReference type="HOGENOM" id="CLU_029499_14_1_6"/>
<dbReference type="UniPathway" id="UPA00164"/>
<dbReference type="Proteomes" id="UP000007067">
    <property type="component" value="Chromosome"/>
</dbReference>
<dbReference type="GO" id="GO:0005524">
    <property type="term" value="F:ATP binding"/>
    <property type="evidence" value="ECO:0007669"/>
    <property type="project" value="UniProtKB-KW"/>
</dbReference>
<dbReference type="GO" id="GO:0008878">
    <property type="term" value="F:glucose-1-phosphate adenylyltransferase activity"/>
    <property type="evidence" value="ECO:0007669"/>
    <property type="project" value="UniProtKB-UniRule"/>
</dbReference>
<dbReference type="GO" id="GO:0005978">
    <property type="term" value="P:glycogen biosynthetic process"/>
    <property type="evidence" value="ECO:0007669"/>
    <property type="project" value="UniProtKB-UniRule"/>
</dbReference>
<dbReference type="CDD" id="cd02508">
    <property type="entry name" value="ADP_Glucose_PP"/>
    <property type="match status" value="1"/>
</dbReference>
<dbReference type="CDD" id="cd04651">
    <property type="entry name" value="LbH_G1P_AT_C"/>
    <property type="match status" value="1"/>
</dbReference>
<dbReference type="FunFam" id="2.160.10.10:FF:000006">
    <property type="entry name" value="Glucose-1-phosphate adenylyltransferase"/>
    <property type="match status" value="1"/>
</dbReference>
<dbReference type="FunFam" id="3.90.550.10:FF:000014">
    <property type="entry name" value="Glucose-1-phosphate adenylyltransferase"/>
    <property type="match status" value="1"/>
</dbReference>
<dbReference type="Gene3D" id="2.160.10.10">
    <property type="entry name" value="Hexapeptide repeat proteins"/>
    <property type="match status" value="1"/>
</dbReference>
<dbReference type="Gene3D" id="3.90.550.10">
    <property type="entry name" value="Spore Coat Polysaccharide Biosynthesis Protein SpsA, Chain A"/>
    <property type="match status" value="1"/>
</dbReference>
<dbReference type="HAMAP" id="MF_00624">
    <property type="entry name" value="GlgC"/>
    <property type="match status" value="1"/>
</dbReference>
<dbReference type="InterPro" id="IPR011831">
    <property type="entry name" value="ADP-Glc_PPase"/>
</dbReference>
<dbReference type="InterPro" id="IPR005836">
    <property type="entry name" value="ADP_Glu_pyroP_CS"/>
</dbReference>
<dbReference type="InterPro" id="IPR023049">
    <property type="entry name" value="GlgC_bac"/>
</dbReference>
<dbReference type="InterPro" id="IPR056818">
    <property type="entry name" value="GlmU/GlgC-like_hexapep"/>
</dbReference>
<dbReference type="InterPro" id="IPR005835">
    <property type="entry name" value="NTP_transferase_dom"/>
</dbReference>
<dbReference type="InterPro" id="IPR029044">
    <property type="entry name" value="Nucleotide-diphossugar_trans"/>
</dbReference>
<dbReference type="InterPro" id="IPR011004">
    <property type="entry name" value="Trimer_LpxA-like_sf"/>
</dbReference>
<dbReference type="NCBIfam" id="TIGR02091">
    <property type="entry name" value="glgC"/>
    <property type="match status" value="1"/>
</dbReference>
<dbReference type="NCBIfam" id="NF001947">
    <property type="entry name" value="PRK00725.1"/>
    <property type="match status" value="1"/>
</dbReference>
<dbReference type="NCBIfam" id="NF002023">
    <property type="entry name" value="PRK00844.1"/>
    <property type="match status" value="1"/>
</dbReference>
<dbReference type="PANTHER" id="PTHR43523:SF2">
    <property type="entry name" value="GLUCOSE-1-PHOSPHATE ADENYLYLTRANSFERASE"/>
    <property type="match status" value="1"/>
</dbReference>
<dbReference type="PANTHER" id="PTHR43523">
    <property type="entry name" value="GLUCOSE-1-PHOSPHATE ADENYLYLTRANSFERASE-RELATED"/>
    <property type="match status" value="1"/>
</dbReference>
<dbReference type="Pfam" id="PF24894">
    <property type="entry name" value="Hexapep_GlmU"/>
    <property type="match status" value="1"/>
</dbReference>
<dbReference type="Pfam" id="PF00483">
    <property type="entry name" value="NTP_transferase"/>
    <property type="match status" value="1"/>
</dbReference>
<dbReference type="SUPFAM" id="SSF53448">
    <property type="entry name" value="Nucleotide-diphospho-sugar transferases"/>
    <property type="match status" value="1"/>
</dbReference>
<dbReference type="SUPFAM" id="SSF51161">
    <property type="entry name" value="Trimeric LpxA-like enzymes"/>
    <property type="match status" value="1"/>
</dbReference>
<dbReference type="PROSITE" id="PS00808">
    <property type="entry name" value="ADP_GLC_PYROPHOSPH_1"/>
    <property type="match status" value="1"/>
</dbReference>
<dbReference type="PROSITE" id="PS00809">
    <property type="entry name" value="ADP_GLC_PYROPHOSPH_2"/>
    <property type="match status" value="1"/>
</dbReference>
<dbReference type="PROSITE" id="PS00810">
    <property type="entry name" value="ADP_GLC_PYROPHOSPH_3"/>
    <property type="match status" value="1"/>
</dbReference>
<gene>
    <name evidence="1" type="primary">glgC</name>
    <name type="ordered locus">SBO_3428</name>
</gene>
<organism>
    <name type="scientific">Shigella boydii serotype 4 (strain Sb227)</name>
    <dbReference type="NCBI Taxonomy" id="300268"/>
    <lineage>
        <taxon>Bacteria</taxon>
        <taxon>Pseudomonadati</taxon>
        <taxon>Pseudomonadota</taxon>
        <taxon>Gammaproteobacteria</taxon>
        <taxon>Enterobacterales</taxon>
        <taxon>Enterobacteriaceae</taxon>
        <taxon>Shigella</taxon>
    </lineage>
</organism>
<protein>
    <recommendedName>
        <fullName evidence="1">Glucose-1-phosphate adenylyltransferase</fullName>
        <ecNumber evidence="1">2.7.7.27</ecNumber>
    </recommendedName>
    <alternativeName>
        <fullName evidence="1">ADP-glucose pyrophosphorylase</fullName>
        <shortName evidence="1">ADPGlc PPase</shortName>
    </alternativeName>
    <alternativeName>
        <fullName evidence="1">ADP-glucose synthase</fullName>
    </alternativeName>
</protein>
<feature type="chain" id="PRO_0000261900" description="Glucose-1-phosphate adenylyltransferase">
    <location>
        <begin position="1"/>
        <end position="431"/>
    </location>
</feature>
<feature type="binding site" evidence="1">
    <location>
        <position position="39"/>
    </location>
    <ligand>
        <name>beta-D-fructose 1,6-bisphosphate</name>
        <dbReference type="ChEBI" id="CHEBI:32966"/>
    </ligand>
</feature>
<feature type="binding site" evidence="1">
    <location>
        <position position="40"/>
    </location>
    <ligand>
        <name>AMP</name>
        <dbReference type="ChEBI" id="CHEBI:456215"/>
    </ligand>
</feature>
<feature type="binding site" evidence="1">
    <location>
        <position position="46"/>
    </location>
    <ligand>
        <name>AMP</name>
        <dbReference type="ChEBI" id="CHEBI:456215"/>
    </ligand>
</feature>
<feature type="binding site" evidence="1">
    <location>
        <position position="52"/>
    </location>
    <ligand>
        <name>AMP</name>
        <dbReference type="ChEBI" id="CHEBI:456215"/>
    </ligand>
</feature>
<feature type="binding site" evidence="1">
    <location>
        <position position="114"/>
    </location>
    <ligand>
        <name>alpha-D-glucose 1-phosphate</name>
        <dbReference type="ChEBI" id="CHEBI:58601"/>
    </ligand>
</feature>
<feature type="binding site" evidence="1">
    <location>
        <position position="130"/>
    </location>
    <ligand>
        <name>AMP</name>
        <dbReference type="ChEBI" id="CHEBI:456215"/>
    </ligand>
</feature>
<feature type="binding site" evidence="1">
    <location>
        <position position="179"/>
    </location>
    <ligand>
        <name>alpha-D-glucose 1-phosphate</name>
        <dbReference type="ChEBI" id="CHEBI:58601"/>
    </ligand>
</feature>
<feature type="binding site" evidence="1">
    <location>
        <begin position="194"/>
        <end position="195"/>
    </location>
    <ligand>
        <name>alpha-D-glucose 1-phosphate</name>
        <dbReference type="ChEBI" id="CHEBI:58601"/>
    </ligand>
</feature>
<feature type="binding site" evidence="1">
    <location>
        <position position="212"/>
    </location>
    <ligand>
        <name>alpha-D-glucose 1-phosphate</name>
        <dbReference type="ChEBI" id="CHEBI:58601"/>
    </ligand>
</feature>
<feature type="binding site" evidence="1">
    <location>
        <position position="370"/>
    </location>
    <ligand>
        <name>AMP</name>
        <dbReference type="ChEBI" id="CHEBI:456215"/>
    </ligand>
</feature>
<feature type="binding site" evidence="1">
    <location>
        <position position="386"/>
    </location>
    <ligand>
        <name>AMP</name>
        <dbReference type="ChEBI" id="CHEBI:456215"/>
    </ligand>
</feature>
<feature type="binding site" evidence="1">
    <location>
        <begin position="419"/>
        <end position="423"/>
    </location>
    <ligand>
        <name>beta-D-fructose 1,6-bisphosphate</name>
        <dbReference type="ChEBI" id="CHEBI:32966"/>
    </ligand>
</feature>
<feature type="binding site" evidence="1">
    <location>
        <begin position="429"/>
        <end position="431"/>
    </location>
    <ligand>
        <name>beta-D-fructose 1,6-bisphosphate</name>
        <dbReference type="ChEBI" id="CHEBI:32966"/>
    </ligand>
</feature>
<feature type="site" description="Could play a key role in the communication between the regulatory and the substrate sites" evidence="1">
    <location>
        <position position="74"/>
    </location>
</feature>
<feature type="site" description="Could play a key role in the communication between the regulatory and the substrate sites" evidence="1">
    <location>
        <position position="113"/>
    </location>
</feature>